<evidence type="ECO:0000250" key="1">
    <source>
        <dbReference type="UniProtKB" id="D4A7H1"/>
    </source>
</evidence>
<evidence type="ECO:0000250" key="2">
    <source>
        <dbReference type="UniProtKB" id="F7B113"/>
    </source>
</evidence>
<evidence type="ECO:0000250" key="3">
    <source>
        <dbReference type="UniProtKB" id="Q8BZ00"/>
    </source>
</evidence>
<evidence type="ECO:0000255" key="4"/>
<evidence type="ECO:0000256" key="5">
    <source>
        <dbReference type="SAM" id="MobiDB-lite"/>
    </source>
</evidence>
<evidence type="ECO:0000269" key="6">
    <source>
    </source>
</evidence>
<evidence type="ECO:0000269" key="7">
    <source>
    </source>
</evidence>
<evidence type="ECO:0000269" key="8">
    <source>
    </source>
</evidence>
<evidence type="ECO:0000269" key="9">
    <source>
    </source>
</evidence>
<evidence type="ECO:0000269" key="10">
    <source>
    </source>
</evidence>
<evidence type="ECO:0000269" key="11">
    <source>
    </source>
</evidence>
<evidence type="ECO:0000269" key="12">
    <source>
    </source>
</evidence>
<evidence type="ECO:0000269" key="13">
    <source>
    </source>
</evidence>
<evidence type="ECO:0000305" key="14"/>
<evidence type="ECO:0000305" key="15">
    <source>
    </source>
</evidence>
<evidence type="ECO:0000312" key="16">
    <source>
        <dbReference type="HGNC" id="HGNC:20653"/>
    </source>
</evidence>
<accession>Q8IVB4</accession>
<accession>A6NMQ9</accession>
<accession>Q3LIC2</accession>
<accession>Q5JPI6</accession>
<accession>Q5WA58</accession>
<accession>Q8NAB9</accession>
<name>SL9A9_HUMAN</name>
<feature type="chain" id="PRO_0000052367" description="Sodium/hydrogen exchanger 9">
    <location>
        <begin position="1"/>
        <end position="645"/>
    </location>
</feature>
<feature type="topological domain" description="Lumenal" evidence="2">
    <location>
        <begin position="1"/>
        <end position="20"/>
    </location>
</feature>
<feature type="transmembrane region" description="Helical; Name=1" evidence="4">
    <location>
        <begin position="21"/>
        <end position="41"/>
    </location>
</feature>
<feature type="topological domain" description="Cytoplasmic" evidence="2">
    <location>
        <begin position="42"/>
        <end position="45"/>
    </location>
</feature>
<feature type="transmembrane region" description="Helical; Name=2" evidence="4">
    <location>
        <begin position="46"/>
        <end position="66"/>
    </location>
</feature>
<feature type="topological domain" description="Lumenal" evidence="2">
    <location>
        <begin position="67"/>
        <end position="126"/>
    </location>
</feature>
<feature type="transmembrane region" description="Helical; Name=3" evidence="4">
    <location>
        <begin position="127"/>
        <end position="147"/>
    </location>
</feature>
<feature type="topological domain" description="Cytoplasmic" evidence="2">
    <location>
        <begin position="148"/>
        <end position="164"/>
    </location>
</feature>
<feature type="transmembrane region" description="Helical; Name=4" evidence="4">
    <location>
        <begin position="165"/>
        <end position="185"/>
    </location>
</feature>
<feature type="topological domain" description="Lumenal" evidence="2">
    <location>
        <begin position="186"/>
        <end position="203"/>
    </location>
</feature>
<feature type="transmembrane region" description="Helical; Name=5" evidence="4">
    <location>
        <begin position="204"/>
        <end position="224"/>
    </location>
</feature>
<feature type="topological domain" description="Cytoplasmic" evidence="2">
    <location>
        <begin position="225"/>
        <end position="235"/>
    </location>
</feature>
<feature type="transmembrane region" description="Helical; Name=6" evidence="4">
    <location>
        <begin position="236"/>
        <end position="256"/>
    </location>
</feature>
<feature type="topological domain" description="Lumenal" evidence="2">
    <location>
        <begin position="257"/>
        <end position="277"/>
    </location>
</feature>
<feature type="transmembrane region" description="Helical; Name=7" evidence="4">
    <location>
        <begin position="278"/>
        <end position="298"/>
    </location>
</feature>
<feature type="topological domain" description="Cytoplasmic" evidence="2">
    <location>
        <begin position="299"/>
        <end position="301"/>
    </location>
</feature>
<feature type="transmembrane region" description="Helical; Name=8" evidence="4">
    <location>
        <begin position="302"/>
        <end position="322"/>
    </location>
</feature>
<feature type="transmembrane region" description="Helical; Name=9" evidence="4">
    <location>
        <begin position="323"/>
        <end position="343"/>
    </location>
</feature>
<feature type="topological domain" description="Cytoplasmic" evidence="2">
    <location>
        <begin position="344"/>
        <end position="364"/>
    </location>
</feature>
<feature type="transmembrane region" description="Helical; Name=10" evidence="4">
    <location>
        <begin position="365"/>
        <end position="385"/>
    </location>
</feature>
<feature type="topological domain" description="Lumenal" evidence="2">
    <location>
        <position position="386"/>
    </location>
</feature>
<feature type="transmembrane region" description="Helical; Name=11" evidence="4">
    <location>
        <begin position="387"/>
        <end position="407"/>
    </location>
</feature>
<feature type="topological domain" description="Cytoplasmic" evidence="2">
    <location>
        <begin position="408"/>
        <end position="429"/>
    </location>
</feature>
<feature type="transmembrane region" description="Helical; Name=12" evidence="4">
    <location>
        <begin position="430"/>
        <end position="450"/>
    </location>
</feature>
<feature type="topological domain" description="Lumenal" evidence="2">
    <location>
        <begin position="451"/>
        <end position="465"/>
    </location>
</feature>
<feature type="transmembrane region" description="Helical; Name=13" evidence="4">
    <location>
        <begin position="466"/>
        <end position="486"/>
    </location>
</feature>
<feature type="topological domain" description="Cytoplasmic" evidence="9">
    <location>
        <begin position="487"/>
        <end position="645"/>
    </location>
</feature>
<feature type="region of interest" description="Disordered" evidence="5">
    <location>
        <begin position="594"/>
        <end position="622"/>
    </location>
</feature>
<feature type="glycosylation site" description="N-linked (GlcNAc...) asparagine" evidence="11">
    <location>
        <position position="96"/>
    </location>
</feature>
<feature type="sequence variant" id="VAR_087549" description="In AUTS16." evidence="10">
    <location>
        <begin position="423"/>
        <end position="645"/>
    </location>
</feature>
<feature type="sequence variant" id="VAR_050232" description="In dbSNP:rs16853300.">
    <original>I</original>
    <variation>V</variation>
    <location>
        <position position="540"/>
    </location>
</feature>
<feature type="sequence variant" id="VAR_022114" description="In dbSNP:rs2289491." evidence="8">
    <original>I</original>
    <variation>V</variation>
    <location>
        <position position="589"/>
    </location>
</feature>
<feature type="mutagenesis site" description="Normal protein expression. Does not affect endosomal localization. Fails to alkalinize endosomal lumen." evidence="12">
    <original>V</original>
    <variation>I</variation>
    <location>
        <position position="176"/>
    </location>
</feature>
<feature type="mutagenesis site" description="Normal protein expression. Fails to alkalinize endosomal lumen. Does not affect endosomal localization." evidence="12">
    <original>L</original>
    <variation>S</variation>
    <location>
        <position position="236"/>
    </location>
</feature>
<feature type="mutagenesis site" description="Normal protein expression. Fails to alkalinize endosomal lumen. Does not affect endosomal localization." evidence="12">
    <original>S</original>
    <variation>P</variation>
    <location>
        <position position="438"/>
    </location>
</feature>
<dbReference type="EMBL" id="AY254100">
    <property type="protein sequence ID" value="AAP80573.1"/>
    <property type="molecule type" value="mRNA"/>
</dbReference>
<dbReference type="EMBL" id="AB089794">
    <property type="protein sequence ID" value="BAD69592.1"/>
    <property type="molecule type" value="mRNA"/>
</dbReference>
<dbReference type="EMBL" id="AL832304">
    <property type="protein sequence ID" value="CAI46158.1"/>
    <property type="molecule type" value="mRNA"/>
</dbReference>
<dbReference type="EMBL" id="AC131210">
    <property type="status" value="NOT_ANNOTATED_CDS"/>
    <property type="molecule type" value="Genomic_DNA"/>
</dbReference>
<dbReference type="EMBL" id="BC035779">
    <property type="protein sequence ID" value="AAH35779.1"/>
    <property type="molecule type" value="mRNA"/>
</dbReference>
<dbReference type="EMBL" id="AK092932">
    <property type="protein sequence ID" value="BAC04005.1"/>
    <property type="status" value="ALT_INIT"/>
    <property type="molecule type" value="mRNA"/>
</dbReference>
<dbReference type="EMBL" id="AB075486">
    <property type="protein sequence ID" value="BAE45746.1"/>
    <property type="molecule type" value="mRNA"/>
</dbReference>
<dbReference type="CCDS" id="CCDS33872.1"/>
<dbReference type="RefSeq" id="NP_775924.1">
    <property type="nucleotide sequence ID" value="NM_173653.4"/>
</dbReference>
<dbReference type="SMR" id="Q8IVB4"/>
<dbReference type="BioGRID" id="130044">
    <property type="interactions" value="23"/>
</dbReference>
<dbReference type="FunCoup" id="Q8IVB4">
    <property type="interactions" value="186"/>
</dbReference>
<dbReference type="IntAct" id="Q8IVB4">
    <property type="interactions" value="3"/>
</dbReference>
<dbReference type="MINT" id="Q8IVB4"/>
<dbReference type="STRING" id="9606.ENSP00000320246"/>
<dbReference type="TCDB" id="2.A.36.1.19">
    <property type="family name" value="the monovalent cation:proton antiporter-1 (cpa1) family"/>
</dbReference>
<dbReference type="GlyCosmos" id="Q8IVB4">
    <property type="glycosylation" value="1 site, No reported glycans"/>
</dbReference>
<dbReference type="GlyGen" id="Q8IVB4">
    <property type="glycosylation" value="1 site"/>
</dbReference>
<dbReference type="iPTMnet" id="Q8IVB4"/>
<dbReference type="PhosphoSitePlus" id="Q8IVB4"/>
<dbReference type="SwissPalm" id="Q8IVB4"/>
<dbReference type="BioMuta" id="SLC9A9"/>
<dbReference type="DMDM" id="44888222"/>
<dbReference type="jPOST" id="Q8IVB4"/>
<dbReference type="MassIVE" id="Q8IVB4"/>
<dbReference type="PaxDb" id="9606-ENSP00000320246"/>
<dbReference type="PeptideAtlas" id="Q8IVB4"/>
<dbReference type="ProteomicsDB" id="70678"/>
<dbReference type="Antibodypedia" id="18118">
    <property type="antibodies" value="210 antibodies from 27 providers"/>
</dbReference>
<dbReference type="DNASU" id="285195"/>
<dbReference type="Ensembl" id="ENST00000316549.11">
    <property type="protein sequence ID" value="ENSP00000320246.6"/>
    <property type="gene ID" value="ENSG00000181804.15"/>
</dbReference>
<dbReference type="GeneID" id="285195"/>
<dbReference type="KEGG" id="hsa:285195"/>
<dbReference type="MANE-Select" id="ENST00000316549.11">
    <property type="protein sequence ID" value="ENSP00000320246.6"/>
    <property type="RefSeq nucleotide sequence ID" value="NM_173653.4"/>
    <property type="RefSeq protein sequence ID" value="NP_775924.1"/>
</dbReference>
<dbReference type="UCSC" id="uc003evn.3">
    <property type="organism name" value="human"/>
</dbReference>
<dbReference type="AGR" id="HGNC:20653"/>
<dbReference type="CTD" id="285195"/>
<dbReference type="DisGeNET" id="285195"/>
<dbReference type="GeneCards" id="SLC9A9"/>
<dbReference type="HGNC" id="HGNC:20653">
    <property type="gene designation" value="SLC9A9"/>
</dbReference>
<dbReference type="HPA" id="ENSG00000181804">
    <property type="expression patterns" value="Low tissue specificity"/>
</dbReference>
<dbReference type="MalaCards" id="SLC9A9"/>
<dbReference type="MIM" id="608396">
    <property type="type" value="gene"/>
</dbReference>
<dbReference type="MIM" id="613410">
    <property type="type" value="phenotype"/>
</dbReference>
<dbReference type="neXtProt" id="NX_Q8IVB4"/>
<dbReference type="OpenTargets" id="ENSG00000181804"/>
<dbReference type="PharmGKB" id="PA134889062"/>
<dbReference type="VEuPathDB" id="HostDB:ENSG00000181804"/>
<dbReference type="eggNOG" id="KOG1965">
    <property type="taxonomic scope" value="Eukaryota"/>
</dbReference>
<dbReference type="GeneTree" id="ENSGT00940000160094"/>
<dbReference type="HOGENOM" id="CLU_005912_7_0_1"/>
<dbReference type="InParanoid" id="Q8IVB4"/>
<dbReference type="OMA" id="FVKAMIY"/>
<dbReference type="OrthoDB" id="196264at2759"/>
<dbReference type="PAN-GO" id="Q8IVB4">
    <property type="GO annotations" value="7 GO annotations based on evolutionary models"/>
</dbReference>
<dbReference type="PhylomeDB" id="Q8IVB4"/>
<dbReference type="TreeFam" id="TF318755"/>
<dbReference type="PathwayCommons" id="Q8IVB4"/>
<dbReference type="Reactome" id="R-HSA-425986">
    <property type="pathway name" value="Sodium/Proton exchangers"/>
</dbReference>
<dbReference type="Reactome" id="R-HSA-5619052">
    <property type="pathway name" value="Defective SLC9A9 causes autism 16 (AUTS16)"/>
</dbReference>
<dbReference type="SignaLink" id="Q8IVB4"/>
<dbReference type="SIGNOR" id="Q8IVB4"/>
<dbReference type="BioGRID-ORCS" id="285195">
    <property type="hits" value="10 hits in 1153 CRISPR screens"/>
</dbReference>
<dbReference type="ChiTaRS" id="SLC9A9">
    <property type="organism name" value="human"/>
</dbReference>
<dbReference type="GenomeRNAi" id="285195"/>
<dbReference type="Pharos" id="Q8IVB4">
    <property type="development level" value="Tbio"/>
</dbReference>
<dbReference type="PRO" id="PR:Q8IVB4"/>
<dbReference type="Proteomes" id="UP000005640">
    <property type="component" value="Chromosome 3"/>
</dbReference>
<dbReference type="RNAct" id="Q8IVB4">
    <property type="molecule type" value="protein"/>
</dbReference>
<dbReference type="Bgee" id="ENSG00000181804">
    <property type="expression patterns" value="Expressed in calcaneal tendon and 173 other cell types or tissues"/>
</dbReference>
<dbReference type="ExpressionAtlas" id="Q8IVB4">
    <property type="expression patterns" value="baseline and differential"/>
</dbReference>
<dbReference type="GO" id="GO:0005769">
    <property type="term" value="C:early endosome"/>
    <property type="evidence" value="ECO:0000314"/>
    <property type="project" value="UniProtKB"/>
</dbReference>
<dbReference type="GO" id="GO:0031901">
    <property type="term" value="C:early endosome membrane"/>
    <property type="evidence" value="ECO:0007669"/>
    <property type="project" value="UniProtKB-SubCell"/>
</dbReference>
<dbReference type="GO" id="GO:0032009">
    <property type="term" value="C:early phagosome"/>
    <property type="evidence" value="ECO:0007669"/>
    <property type="project" value="Ensembl"/>
</dbReference>
<dbReference type="GO" id="GO:0031902">
    <property type="term" value="C:late endosome membrane"/>
    <property type="evidence" value="ECO:0000304"/>
    <property type="project" value="Reactome"/>
</dbReference>
<dbReference type="GO" id="GO:0030670">
    <property type="term" value="C:phagocytic vesicle membrane"/>
    <property type="evidence" value="ECO:0007669"/>
    <property type="project" value="UniProtKB-SubCell"/>
</dbReference>
<dbReference type="GO" id="GO:0005886">
    <property type="term" value="C:plasma membrane"/>
    <property type="evidence" value="ECO:0000318"/>
    <property type="project" value="GO_Central"/>
</dbReference>
<dbReference type="GO" id="GO:0055037">
    <property type="term" value="C:recycling endosome"/>
    <property type="evidence" value="ECO:0000314"/>
    <property type="project" value="UniProtKB"/>
</dbReference>
<dbReference type="GO" id="GO:0055038">
    <property type="term" value="C:recycling endosome membrane"/>
    <property type="evidence" value="ECO:0000314"/>
    <property type="project" value="UniProtKB"/>
</dbReference>
<dbReference type="GO" id="GO:0015386">
    <property type="term" value="F:potassium:proton antiporter activity"/>
    <property type="evidence" value="ECO:0000250"/>
    <property type="project" value="UniProtKB"/>
</dbReference>
<dbReference type="GO" id="GO:0015385">
    <property type="term" value="F:sodium:proton antiporter activity"/>
    <property type="evidence" value="ECO:0000318"/>
    <property type="project" value="GO_Central"/>
</dbReference>
<dbReference type="GO" id="GO:0042742">
    <property type="term" value="P:defense response to bacterium"/>
    <property type="evidence" value="ECO:0007669"/>
    <property type="project" value="Ensembl"/>
</dbReference>
<dbReference type="GO" id="GO:0006811">
    <property type="term" value="P:monoatomic ion transport"/>
    <property type="evidence" value="ECO:0000304"/>
    <property type="project" value="Reactome"/>
</dbReference>
<dbReference type="GO" id="GO:0090382">
    <property type="term" value="P:phagosome maturation"/>
    <property type="evidence" value="ECO:0007669"/>
    <property type="project" value="Ensembl"/>
</dbReference>
<dbReference type="GO" id="GO:0071805">
    <property type="term" value="P:potassium ion transmembrane transport"/>
    <property type="evidence" value="ECO:0000250"/>
    <property type="project" value="UniProtKB"/>
</dbReference>
<dbReference type="GO" id="GO:0051453">
    <property type="term" value="P:regulation of intracellular pH"/>
    <property type="evidence" value="ECO:0000314"/>
    <property type="project" value="UniProtKB"/>
</dbReference>
<dbReference type="GO" id="GO:0098719">
    <property type="term" value="P:sodium ion import across plasma membrane"/>
    <property type="evidence" value="ECO:0000318"/>
    <property type="project" value="GO_Central"/>
</dbReference>
<dbReference type="Gene3D" id="6.10.140.1330">
    <property type="match status" value="1"/>
</dbReference>
<dbReference type="InterPro" id="IPR018422">
    <property type="entry name" value="Cation/H_exchanger_CPA1"/>
</dbReference>
<dbReference type="InterPro" id="IPR006153">
    <property type="entry name" value="Cation/H_exchanger_TM"/>
</dbReference>
<dbReference type="InterPro" id="IPR004709">
    <property type="entry name" value="NaH_exchanger"/>
</dbReference>
<dbReference type="InterPro" id="IPR002090">
    <property type="entry name" value="NHE-6/7/9"/>
</dbReference>
<dbReference type="NCBIfam" id="TIGR00840">
    <property type="entry name" value="b_cpa1"/>
    <property type="match status" value="1"/>
</dbReference>
<dbReference type="PANTHER" id="PTHR10110">
    <property type="entry name" value="SODIUM/HYDROGEN EXCHANGER"/>
    <property type="match status" value="1"/>
</dbReference>
<dbReference type="PANTHER" id="PTHR10110:SF61">
    <property type="entry name" value="SODIUM_HYDROGEN EXCHANGER 9"/>
    <property type="match status" value="1"/>
</dbReference>
<dbReference type="Pfam" id="PF00999">
    <property type="entry name" value="Na_H_Exchanger"/>
    <property type="match status" value="1"/>
</dbReference>
<dbReference type="PRINTS" id="PR01084">
    <property type="entry name" value="NAHEXCHNGR"/>
</dbReference>
<dbReference type="PRINTS" id="PR01088">
    <property type="entry name" value="NAHEXCHNGR6"/>
</dbReference>
<sequence>MERQSRVMSEKDEYQFQHQGAVELLVFNFLLILTILTIWLFKNHRFRFLHETGGAMVYGLIMGLILRYATAPTDIESGTVYDCVKLTFSPSTLLVNITDQVYEYKYKREISQHNINPHQGNAILEKMTFDPEIFFNVLLPPIIFHAGYSLKKRHFFQNLGSILTYAFLGTAISCIVIGLIMYGFVKAMIHAGQLKNGDFHFTDCLFFGSLMSATDPVTVLAIFHELHVDPDLYTLLFGESVLNDAVAIVLTYSISIYSPKENPNAFDAAAFFQSVGNFLGIFAGSFAMGSAYAIITALLTKFTKLCEFPMLETGLFFLLSWSAFLSAEAAGLTGIVAVLFCGVTQAHYTYNNLSSDSKIRTKQLFEFMNFLAENVIFCYMGLALFTFQNHIFNALFILGAFLAIFVARACNIYPLSFLLNLGRKQKIPWNFQHMMMFSGLRGAIAFALAIRNTESQPKQMMFTTTLLLVFFTVWVFGGGTTPMLTWLQIRVGVDLDENLKEDPSSQHQEANNLDKNMTKAESARLFRMWYSFDHKYLKPILTHSGPPLTTTLPEWCGPISRLLTSPQAYGEQLKEDDVECIVNQDELAINYQEQASSPCSPPARLGLDQKASPQTPGKENIYEGDLGLGGYELKLEQTLGQSQLN</sequence>
<proteinExistence type="evidence at protein level"/>
<protein>
    <recommendedName>
        <fullName>Sodium/hydrogen exchanger 9</fullName>
    </recommendedName>
    <alternativeName>
        <fullName>Na(+)/H(+) exchanger 9</fullName>
        <shortName>NHE-9</shortName>
    </alternativeName>
    <alternativeName>
        <fullName>Solute carrier family 9 member 9</fullName>
    </alternativeName>
</protein>
<gene>
    <name evidence="16" type="primary">SLC9A9</name>
    <name type="synonym">NHE9</name>
    <name type="ORF">Nbla00118</name>
</gene>
<comment type="function">
    <text evidence="3 7 12 13 15">Endosomal Na(+), K(+)/H(+) antiporter. Mediates the electroneutral exchange of endosomal luminal H(+) for a cytosolic Na(+) or K(+) (Probable). By facilitating proton efflux, SLC9A9 counteracts the acidity generated by vacuolar (V)-ATPase, thereby limiting luminal acidification. Regulates organellar pH and consequently, e.g., endosome maturation and endocytic trafficking of plasma membrane receptors and neurotransporters (PubMed:15522866, PubMed:24065030, PubMed:28130443). Promotes the recycling of transferrin receptors back to the cell surface to facilitate additional iron uptake in the brain (PubMed:28130443). Regulates synaptic transmission by regulating the luminal pH of axonal endosomes (By similarity). Regulates phagosome lumenal pH, thus affecting phagosome maturation, and consequently, microbicidal activity in macrophages (By similarity). Can also be active at the cell surface of specialized cells, e.g., in the inner ear hair bundles uses the high K(+) of the endolymph to regulate intracelular pH (By similarity).</text>
</comment>
<comment type="catalytic activity">
    <reaction evidence="15">
        <text>Na(+)(in) + H(+)(out) = Na(+)(out) + H(+)(in)</text>
        <dbReference type="Rhea" id="RHEA:29419"/>
        <dbReference type="ChEBI" id="CHEBI:15378"/>
        <dbReference type="ChEBI" id="CHEBI:29101"/>
    </reaction>
</comment>
<comment type="catalytic activity">
    <reaction evidence="3">
        <text>K(+)(in) + H(+)(out) = K(+)(out) + H(+)(in)</text>
        <dbReference type="Rhea" id="RHEA:29467"/>
        <dbReference type="ChEBI" id="CHEBI:15378"/>
        <dbReference type="ChEBI" id="CHEBI:29103"/>
    </reaction>
</comment>
<comment type="subunit">
    <text evidence="1 2 9">Homodimer; phosphatidylinositol-4,5-bisphosphate (PIP2) and phosphatidylinositol 3,4,5-trisphosphate (PIP3) could be involved in the dimer stabilization (By similarity). Interacts (via the C-terminus) with RACK1 (PubMed:18057008). Interacts with CHP1 (By similarity).</text>
</comment>
<comment type="interaction">
    <interactant intactId="EBI-9092184">
        <id>Q8IVB4</id>
    </interactant>
    <interactant intactId="EBI-524753">
        <id>Q8IUH5</id>
        <label>ZDHHC17</label>
    </interactant>
    <organismsDiffer>false</organismsDiffer>
    <experiments>2</experiments>
</comment>
<comment type="subcellular location">
    <subcellularLocation>
        <location evidence="7">Late endosome membrane</location>
        <topology evidence="2">Multi-pass membrane protein</topology>
    </subcellularLocation>
    <subcellularLocation>
        <location evidence="12 13">Early endosome membrane</location>
        <topology evidence="2">Multi-pass membrane protein</topology>
    </subcellularLocation>
    <subcellularLocation>
        <location evidence="7 12 13">Recycling endosome membrane</location>
        <topology evidence="2">Multi-pass membrane protein</topology>
    </subcellularLocation>
    <subcellularLocation>
        <location evidence="3">Cell membrane</location>
        <topology evidence="2">Multi-pass membrane protein</topology>
    </subcellularLocation>
    <subcellularLocation>
        <location evidence="3">Cytoplasmic vesicle</location>
        <location evidence="3">Phagosome membrane</location>
        <topology evidence="2">Multi-pass membrane protein</topology>
    </subcellularLocation>
    <text evidence="3">Localized to the plasma membrane in inner ear hair cell bundle.</text>
</comment>
<comment type="tissue specificity">
    <text evidence="6 7">Ubiquitously expressed in all tissues tested. Expressed at highest levels in heart and skeletal muscle, followed by placenta, kidney, and liver. Expressed in the brain, in the medulla and spinal cord.</text>
</comment>
<comment type="induction">
    <text evidence="7">Conditioned medium from iron-depleted astrocytes increases SLC9A9 levels in human blood-brain barrier endothelial cells (hBMVECs).</text>
</comment>
<comment type="disease">
    <text evidence="6">A chromosomal aberration involving SLC9A9 has been found in a family with early-onset behavioral/developmental disorder with features of attention deficit-hyperactivity disorder and intellectual disability. Inversion inv(3)(p14:q21). The inversion disrupts DOCK3 and SLC9A9.</text>
</comment>
<comment type="disease" evidence="10">
    <disease id="DI-02793">
        <name>Autism 16</name>
        <acronym>AUTS16</acronym>
        <description>A complex multifactorial, pervasive developmental disorder characterized by impairments in reciprocal social interaction and communication, restricted and stereotyped patterns of interests and activities, and the presence of developmental abnormalities by 3 years of age. Most individuals with autism also manifest moderate intellectual disability. AUTS16 can be associated with epilepsy.</description>
        <dbReference type="MIM" id="613410"/>
    </disease>
    <text>Disease susceptibility is associated with variants affecting the gene represented in this entry.</text>
</comment>
<comment type="similarity">
    <text evidence="14">Belongs to the monovalent cation:proton antiporter 1 (CPA1) transporter (TC 2.A.36) family.</text>
</comment>
<comment type="sequence caution" evidence="14">
    <conflict type="erroneous initiation">
        <sequence resource="EMBL-CDS" id="BAC04005"/>
    </conflict>
    <text>Truncated N-terminus.</text>
</comment>
<keyword id="KW-0050">Antiport</keyword>
<keyword id="KW-1269">Autism</keyword>
<keyword id="KW-1268">Autism spectrum disorder</keyword>
<keyword id="KW-1003">Cell membrane</keyword>
<keyword id="KW-0160">Chromosomal rearrangement</keyword>
<keyword id="KW-0968">Cytoplasmic vesicle</keyword>
<keyword id="KW-0225">Disease variant</keyword>
<keyword id="KW-0967">Endosome</keyword>
<keyword id="KW-0325">Glycoprotein</keyword>
<keyword id="KW-0406">Ion transport</keyword>
<keyword id="KW-0472">Membrane</keyword>
<keyword id="KW-1267">Proteomics identification</keyword>
<keyword id="KW-1185">Reference proteome</keyword>
<keyword id="KW-0915">Sodium</keyword>
<keyword id="KW-0739">Sodium transport</keyword>
<keyword id="KW-0812">Transmembrane</keyword>
<keyword id="KW-1133">Transmembrane helix</keyword>
<keyword id="KW-0813">Transport</keyword>
<reference key="1">
    <citation type="journal article" date="2003" name="J. Med. Genet.">
        <title>Disruption of a novel member of a sodium/hydrogen exchanger family and DOCK3 is associated with an attention deficit hyperactivity disorder-like phenotype.</title>
        <authorList>
            <person name="De Silva M.G."/>
            <person name="Elliott K."/>
            <person name="Dahl H.-H.M."/>
            <person name="Fitzpatrick E."/>
            <person name="Wilcox S."/>
            <person name="Delatycki M."/>
            <person name="Williamson R."/>
            <person name="Efron D."/>
            <person name="Lynch M."/>
            <person name="Forrest S."/>
        </authorList>
    </citation>
    <scope>NUCLEOTIDE SEQUENCE [MRNA]</scope>
    <scope>TISSUE SPECIFICITY</scope>
    <scope>CHROMOSOMAL REARRANGEMENT</scope>
</reference>
<reference key="2">
    <citation type="journal article" date="2005" name="J. Biol. Chem.">
        <title>Four Na+/H+ exchanger isoforms are distributed to Golgi and post-Golgi Compartments and are involved in organelle pH regulation.</title>
        <authorList>
            <person name="Nakamura N."/>
            <person name="Tanaka S."/>
            <person name="Teko Y."/>
            <person name="Mitsui K."/>
            <person name="Kanazawa H."/>
        </authorList>
    </citation>
    <scope>NUCLEOTIDE SEQUENCE [MRNA]</scope>
    <scope>FUNCTION</scope>
    <scope>TRANSPORTER ACTIVITY</scope>
    <scope>SUBCELLULAR LOCATION</scope>
    <scope>TISSUE SPECIFICITY</scope>
</reference>
<reference key="3">
    <citation type="journal article" date="2007" name="BMC Genomics">
        <title>The full-ORF clone resource of the German cDNA consortium.</title>
        <authorList>
            <person name="Bechtel S."/>
            <person name="Rosenfelder H."/>
            <person name="Duda A."/>
            <person name="Schmidt C.P."/>
            <person name="Ernst U."/>
            <person name="Wellenreuther R."/>
            <person name="Mehrle A."/>
            <person name="Schuster C."/>
            <person name="Bahr A."/>
            <person name="Bloecker H."/>
            <person name="Heubner D."/>
            <person name="Hoerlein A."/>
            <person name="Michel G."/>
            <person name="Wedler H."/>
            <person name="Koehrer K."/>
            <person name="Ottenwaelder B."/>
            <person name="Poustka A."/>
            <person name="Wiemann S."/>
            <person name="Schupp I."/>
        </authorList>
    </citation>
    <scope>NUCLEOTIDE SEQUENCE [LARGE SCALE MRNA]</scope>
    <scope>VARIANT VAL-589</scope>
    <source>
        <tissue>Lymph node</tissue>
    </source>
</reference>
<reference key="4">
    <citation type="journal article" date="2006" name="Nature">
        <title>The DNA sequence, annotation and analysis of human chromosome 3.</title>
        <authorList>
            <person name="Muzny D.M."/>
            <person name="Scherer S.E."/>
            <person name="Kaul R."/>
            <person name="Wang J."/>
            <person name="Yu J."/>
            <person name="Sudbrak R."/>
            <person name="Buhay C.J."/>
            <person name="Chen R."/>
            <person name="Cree A."/>
            <person name="Ding Y."/>
            <person name="Dugan-Rocha S."/>
            <person name="Gill R."/>
            <person name="Gunaratne P."/>
            <person name="Harris R.A."/>
            <person name="Hawes A.C."/>
            <person name="Hernandez J."/>
            <person name="Hodgson A.V."/>
            <person name="Hume J."/>
            <person name="Jackson A."/>
            <person name="Khan Z.M."/>
            <person name="Kovar-Smith C."/>
            <person name="Lewis L.R."/>
            <person name="Lozado R.J."/>
            <person name="Metzker M.L."/>
            <person name="Milosavljevic A."/>
            <person name="Miner G.R."/>
            <person name="Morgan M.B."/>
            <person name="Nazareth L.V."/>
            <person name="Scott G."/>
            <person name="Sodergren E."/>
            <person name="Song X.-Z."/>
            <person name="Steffen D."/>
            <person name="Wei S."/>
            <person name="Wheeler D.A."/>
            <person name="Wright M.W."/>
            <person name="Worley K.C."/>
            <person name="Yuan Y."/>
            <person name="Zhang Z."/>
            <person name="Adams C.Q."/>
            <person name="Ansari-Lari M.A."/>
            <person name="Ayele M."/>
            <person name="Brown M.J."/>
            <person name="Chen G."/>
            <person name="Chen Z."/>
            <person name="Clendenning J."/>
            <person name="Clerc-Blankenburg K.P."/>
            <person name="Chen R."/>
            <person name="Chen Z."/>
            <person name="Davis C."/>
            <person name="Delgado O."/>
            <person name="Dinh H.H."/>
            <person name="Dong W."/>
            <person name="Draper H."/>
            <person name="Ernst S."/>
            <person name="Fu G."/>
            <person name="Gonzalez-Garay M.L."/>
            <person name="Garcia D.K."/>
            <person name="Gillett W."/>
            <person name="Gu J."/>
            <person name="Hao B."/>
            <person name="Haugen E."/>
            <person name="Havlak P."/>
            <person name="He X."/>
            <person name="Hennig S."/>
            <person name="Hu S."/>
            <person name="Huang W."/>
            <person name="Jackson L.R."/>
            <person name="Jacob L.S."/>
            <person name="Kelly S.H."/>
            <person name="Kube M."/>
            <person name="Levy R."/>
            <person name="Li Z."/>
            <person name="Liu B."/>
            <person name="Liu J."/>
            <person name="Liu W."/>
            <person name="Lu J."/>
            <person name="Maheshwari M."/>
            <person name="Nguyen B.-V."/>
            <person name="Okwuonu G.O."/>
            <person name="Palmeiri A."/>
            <person name="Pasternak S."/>
            <person name="Perez L.M."/>
            <person name="Phelps K.A."/>
            <person name="Plopper F.J."/>
            <person name="Qiang B."/>
            <person name="Raymond C."/>
            <person name="Rodriguez R."/>
            <person name="Saenphimmachak C."/>
            <person name="Santibanez J."/>
            <person name="Shen H."/>
            <person name="Shen Y."/>
            <person name="Subramanian S."/>
            <person name="Tabor P.E."/>
            <person name="Verduzco D."/>
            <person name="Waldron L."/>
            <person name="Wang J."/>
            <person name="Wang J."/>
            <person name="Wang Q."/>
            <person name="Williams G.A."/>
            <person name="Wong G.K.-S."/>
            <person name="Yao Z."/>
            <person name="Zhang J."/>
            <person name="Zhang X."/>
            <person name="Zhao G."/>
            <person name="Zhou J."/>
            <person name="Zhou Y."/>
            <person name="Nelson D."/>
            <person name="Lehrach H."/>
            <person name="Reinhardt R."/>
            <person name="Naylor S.L."/>
            <person name="Yang H."/>
            <person name="Olson M."/>
            <person name="Weinstock G."/>
            <person name="Gibbs R.A."/>
        </authorList>
    </citation>
    <scope>NUCLEOTIDE SEQUENCE [LARGE SCALE GENOMIC DNA]</scope>
</reference>
<reference key="5">
    <citation type="journal article" date="2004" name="Genome Res.">
        <title>The status, quality, and expansion of the NIH full-length cDNA project: the Mammalian Gene Collection (MGC).</title>
        <authorList>
            <consortium name="The MGC Project Team"/>
        </authorList>
    </citation>
    <scope>NUCLEOTIDE SEQUENCE [LARGE SCALE MRNA]</scope>
    <source>
        <tissue>Ovary</tissue>
    </source>
</reference>
<reference key="6">
    <citation type="journal article" date="2004" name="Nat. Genet.">
        <title>Complete sequencing and characterization of 21,243 full-length human cDNAs.</title>
        <authorList>
            <person name="Ota T."/>
            <person name="Suzuki Y."/>
            <person name="Nishikawa T."/>
            <person name="Otsuki T."/>
            <person name="Sugiyama T."/>
            <person name="Irie R."/>
            <person name="Wakamatsu A."/>
            <person name="Hayashi K."/>
            <person name="Sato H."/>
            <person name="Nagai K."/>
            <person name="Kimura K."/>
            <person name="Makita H."/>
            <person name="Sekine M."/>
            <person name="Obayashi M."/>
            <person name="Nishi T."/>
            <person name="Shibahara T."/>
            <person name="Tanaka T."/>
            <person name="Ishii S."/>
            <person name="Yamamoto J."/>
            <person name="Saito K."/>
            <person name="Kawai Y."/>
            <person name="Isono Y."/>
            <person name="Nakamura Y."/>
            <person name="Nagahari K."/>
            <person name="Murakami K."/>
            <person name="Yasuda T."/>
            <person name="Iwayanagi T."/>
            <person name="Wagatsuma M."/>
            <person name="Shiratori A."/>
            <person name="Sudo H."/>
            <person name="Hosoiri T."/>
            <person name="Kaku Y."/>
            <person name="Kodaira H."/>
            <person name="Kondo H."/>
            <person name="Sugawara M."/>
            <person name="Takahashi M."/>
            <person name="Kanda K."/>
            <person name="Yokoi T."/>
            <person name="Furuya T."/>
            <person name="Kikkawa E."/>
            <person name="Omura Y."/>
            <person name="Abe K."/>
            <person name="Kamihara K."/>
            <person name="Katsuta N."/>
            <person name="Sato K."/>
            <person name="Tanikawa M."/>
            <person name="Yamazaki M."/>
            <person name="Ninomiya K."/>
            <person name="Ishibashi T."/>
            <person name="Yamashita H."/>
            <person name="Murakawa K."/>
            <person name="Fujimori K."/>
            <person name="Tanai H."/>
            <person name="Kimata M."/>
            <person name="Watanabe M."/>
            <person name="Hiraoka S."/>
            <person name="Chiba Y."/>
            <person name="Ishida S."/>
            <person name="Ono Y."/>
            <person name="Takiguchi S."/>
            <person name="Watanabe S."/>
            <person name="Yosida M."/>
            <person name="Hotuta T."/>
            <person name="Kusano J."/>
            <person name="Kanehori K."/>
            <person name="Takahashi-Fujii A."/>
            <person name="Hara H."/>
            <person name="Tanase T.-O."/>
            <person name="Nomura Y."/>
            <person name="Togiya S."/>
            <person name="Komai F."/>
            <person name="Hara R."/>
            <person name="Takeuchi K."/>
            <person name="Arita M."/>
            <person name="Imose N."/>
            <person name="Musashino K."/>
            <person name="Yuuki H."/>
            <person name="Oshima A."/>
            <person name="Sasaki N."/>
            <person name="Aotsuka S."/>
            <person name="Yoshikawa Y."/>
            <person name="Matsunawa H."/>
            <person name="Ichihara T."/>
            <person name="Shiohata N."/>
            <person name="Sano S."/>
            <person name="Moriya S."/>
            <person name="Momiyama H."/>
            <person name="Satoh N."/>
            <person name="Takami S."/>
            <person name="Terashima Y."/>
            <person name="Suzuki O."/>
            <person name="Nakagawa S."/>
            <person name="Senoh A."/>
            <person name="Mizoguchi H."/>
            <person name="Goto Y."/>
            <person name="Shimizu F."/>
            <person name="Wakebe H."/>
            <person name="Hishigaki H."/>
            <person name="Watanabe T."/>
            <person name="Sugiyama A."/>
            <person name="Takemoto M."/>
            <person name="Kawakami B."/>
            <person name="Yamazaki M."/>
            <person name="Watanabe K."/>
            <person name="Kumagai A."/>
            <person name="Itakura S."/>
            <person name="Fukuzumi Y."/>
            <person name="Fujimori Y."/>
            <person name="Komiyama M."/>
            <person name="Tashiro H."/>
            <person name="Tanigami A."/>
            <person name="Fujiwara T."/>
            <person name="Ono T."/>
            <person name="Yamada K."/>
            <person name="Fujii Y."/>
            <person name="Ozaki K."/>
            <person name="Hirao M."/>
            <person name="Ohmori Y."/>
            <person name="Kawabata A."/>
            <person name="Hikiji T."/>
            <person name="Kobatake N."/>
            <person name="Inagaki H."/>
            <person name="Ikema Y."/>
            <person name="Okamoto S."/>
            <person name="Okitani R."/>
            <person name="Kawakami T."/>
            <person name="Noguchi S."/>
            <person name="Itoh T."/>
            <person name="Shigeta K."/>
            <person name="Senba T."/>
            <person name="Matsumura K."/>
            <person name="Nakajima Y."/>
            <person name="Mizuno T."/>
            <person name="Morinaga M."/>
            <person name="Sasaki M."/>
            <person name="Togashi T."/>
            <person name="Oyama M."/>
            <person name="Hata H."/>
            <person name="Watanabe M."/>
            <person name="Komatsu T."/>
            <person name="Mizushima-Sugano J."/>
            <person name="Satoh T."/>
            <person name="Shirai Y."/>
            <person name="Takahashi Y."/>
            <person name="Nakagawa K."/>
            <person name="Okumura K."/>
            <person name="Nagase T."/>
            <person name="Nomura N."/>
            <person name="Kikuchi H."/>
            <person name="Masuho Y."/>
            <person name="Yamashita R."/>
            <person name="Nakai K."/>
            <person name="Yada T."/>
            <person name="Nakamura Y."/>
            <person name="Ohara O."/>
            <person name="Isogai T."/>
            <person name="Sugano S."/>
        </authorList>
    </citation>
    <scope>NUCLEOTIDE SEQUENCE [LARGE SCALE MRNA] OF 248-645</scope>
    <source>
        <tissue>Spleen</tissue>
    </source>
</reference>
<reference key="7">
    <citation type="journal article" date="2003" name="Cancer Lett.">
        <title>Neuroblastoma oligo-capping cDNA project: toward the understanding of the genesis and biology of neuroblastoma.</title>
        <authorList>
            <person name="Ohira M."/>
            <person name="Morohashi A."/>
            <person name="Nakamura Y."/>
            <person name="Isogai E."/>
            <person name="Furuya K."/>
            <person name="Hamano S."/>
            <person name="Machida T."/>
            <person name="Aoyama M."/>
            <person name="Fukumura M."/>
            <person name="Miyazaki K."/>
            <person name="Suzuki Y."/>
            <person name="Sugano S."/>
            <person name="Hirato J."/>
            <person name="Nakagawara A."/>
        </authorList>
    </citation>
    <scope>NUCLEOTIDE SEQUENCE [LARGE SCALE MRNA] OF 431-645</scope>
    <source>
        <tissue>Neuroblastoma</tissue>
    </source>
</reference>
<reference key="8">
    <citation type="journal article" date="2008" name="J. Biol. Chem.">
        <title>Cell surface levels of organellar Na+/H+ exchanger isoform 6 are regulated by interaction with RACK1.</title>
        <authorList>
            <person name="Ohgaki R."/>
            <person name="Fukura N."/>
            <person name="Matsushita M."/>
            <person name="Mitsui K."/>
            <person name="Kanazawa H."/>
        </authorList>
    </citation>
    <scope>INTERACTION WITH RACK1</scope>
</reference>
<reference key="9">
    <citation type="journal article" date="2008" name="Science">
        <title>Identifying autism loci and genes by tracing recent shared ancestry.</title>
        <authorList>
            <person name="Morrow E.M."/>
            <person name="Yoo S.-Y."/>
            <person name="Flavell S.W."/>
            <person name="Kim T.-K."/>
            <person name="Lin Y."/>
            <person name="Hill R.S."/>
            <person name="Mukaddes N.M."/>
            <person name="Balkhy S."/>
            <person name="Gascon G."/>
            <person name="Hashmi A."/>
            <person name="Al-Saad S."/>
            <person name="Ware J."/>
            <person name="Joseph R.M."/>
            <person name="Greenblatt R."/>
            <person name="Gleason D."/>
            <person name="Ertelt J.A."/>
            <person name="Apse K.A."/>
            <person name="Bodell A."/>
            <person name="Partlow J.N."/>
            <person name="Barry B."/>
            <person name="Yao H."/>
            <person name="Markianos K."/>
            <person name="Ferland R.J."/>
            <person name="Greenberg M.E."/>
            <person name="Walsh C.A."/>
        </authorList>
    </citation>
    <scope>INVOLVEMENT IN AUTS16</scope>
    <scope>VARIANT AUTS16 423-ARG--ASN-645 DEL</scope>
</reference>
<reference key="10">
    <citation type="journal article" date="2009" name="J. Proteome Res.">
        <title>Glycoproteomics analysis of human liver tissue by combination of multiple enzyme digestion and hydrazide chemistry.</title>
        <authorList>
            <person name="Chen R."/>
            <person name="Jiang X."/>
            <person name="Sun D."/>
            <person name="Han G."/>
            <person name="Wang F."/>
            <person name="Ye M."/>
            <person name="Wang L."/>
            <person name="Zou H."/>
        </authorList>
    </citation>
    <scope>GLYCOSYLATION [LARGE SCALE ANALYSIS] AT ASN-96</scope>
    <source>
        <tissue>Liver</tissue>
    </source>
</reference>
<reference key="11">
    <citation type="journal article" date="2013" name="Nat. Commun.">
        <title>Functional evaluation of autism-associated mutations in NHE9.</title>
        <authorList>
            <person name="Kondapalli K.C."/>
            <person name="Hack A."/>
            <person name="Schushan M."/>
            <person name="Landau M."/>
            <person name="Ben-Tal N."/>
            <person name="Rao R."/>
        </authorList>
    </citation>
    <scope>FUNCTION</scope>
    <scope>SUBCELLULAR LOCATION</scope>
    <scope>MUTAGENESIS OF VAL-176; LEU-236 AND SER-438</scope>
</reference>
<reference key="12">
    <citation type="journal article" date="2014" name="J. Proteomics">
        <title>An enzyme assisted RP-RPLC approach for in-depth analysis of human liver phosphoproteome.</title>
        <authorList>
            <person name="Bian Y."/>
            <person name="Song C."/>
            <person name="Cheng K."/>
            <person name="Dong M."/>
            <person name="Wang F."/>
            <person name="Huang J."/>
            <person name="Sun D."/>
            <person name="Wang L."/>
            <person name="Ye M."/>
            <person name="Zou H."/>
        </authorList>
    </citation>
    <scope>IDENTIFICATION BY MASS SPECTROMETRY [LARGE SCALE ANALYSIS]</scope>
    <source>
        <tissue>Liver</tissue>
    </source>
</reference>
<reference key="13">
    <citation type="journal article" date="2017" name="J. Biol. Chem.">
        <title>Na+/H+ exchanger 9 regulates iron mobilization at the blood-brain barrier in response to iron starvation.</title>
        <authorList>
            <person name="Beydoun R."/>
            <person name="Hamood M.A."/>
            <person name="Gomez Zubieta D.M."/>
            <person name="Kondapalli K.C."/>
        </authorList>
    </citation>
    <scope>FUNCTION</scope>
    <scope>SUBCELLULAR LOCATION</scope>
    <scope>INDUCTION</scope>
</reference>
<organism>
    <name type="scientific">Homo sapiens</name>
    <name type="common">Human</name>
    <dbReference type="NCBI Taxonomy" id="9606"/>
    <lineage>
        <taxon>Eukaryota</taxon>
        <taxon>Metazoa</taxon>
        <taxon>Chordata</taxon>
        <taxon>Craniata</taxon>
        <taxon>Vertebrata</taxon>
        <taxon>Euteleostomi</taxon>
        <taxon>Mammalia</taxon>
        <taxon>Eutheria</taxon>
        <taxon>Euarchontoglires</taxon>
        <taxon>Primates</taxon>
        <taxon>Haplorrhini</taxon>
        <taxon>Catarrhini</taxon>
        <taxon>Hominidae</taxon>
        <taxon>Homo</taxon>
    </lineage>
</organism>